<proteinExistence type="inferred from homology"/>
<dbReference type="EC" id="2.4.1.-"/>
<dbReference type="EMBL" id="CR380957">
    <property type="protein sequence ID" value="CAG61598.1"/>
    <property type="molecule type" value="Genomic_DNA"/>
</dbReference>
<dbReference type="RefSeq" id="XP_448635.1">
    <property type="nucleotide sequence ID" value="XM_448635.1"/>
</dbReference>
<dbReference type="FunCoup" id="Q6FMA9">
    <property type="interactions" value="58"/>
</dbReference>
<dbReference type="STRING" id="284593.Q6FMA9"/>
<dbReference type="CAZy" id="GT22">
    <property type="family name" value="Glycosyltransferase Family 22"/>
</dbReference>
<dbReference type="GlyCosmos" id="Q6FMA9">
    <property type="glycosylation" value="2 sites, No reported glycans"/>
</dbReference>
<dbReference type="EnsemblFungi" id="CAGL0K09548g-T">
    <property type="protein sequence ID" value="CAGL0K09548g-T-p1"/>
    <property type="gene ID" value="CAGL0K09548g"/>
</dbReference>
<dbReference type="KEGG" id="cgr:2890237"/>
<dbReference type="CGD" id="CAL0134813">
    <property type="gene designation" value="CAGL0K09548g"/>
</dbReference>
<dbReference type="VEuPathDB" id="FungiDB:CAGL0K09548g"/>
<dbReference type="eggNOG" id="KOG4123">
    <property type="taxonomic scope" value="Eukaryota"/>
</dbReference>
<dbReference type="HOGENOM" id="CLU_022957_2_0_1"/>
<dbReference type="InParanoid" id="Q6FMA9"/>
<dbReference type="OMA" id="GIMHQNG"/>
<dbReference type="UniPathway" id="UPA00196"/>
<dbReference type="Proteomes" id="UP000002428">
    <property type="component" value="Chromosome K"/>
</dbReference>
<dbReference type="GO" id="GO:0005789">
    <property type="term" value="C:endoplasmic reticulum membrane"/>
    <property type="evidence" value="ECO:0007669"/>
    <property type="project" value="UniProtKB-SubCell"/>
</dbReference>
<dbReference type="GO" id="GO:0000026">
    <property type="term" value="F:alpha-1,2-mannosyltransferase activity"/>
    <property type="evidence" value="ECO:0007669"/>
    <property type="project" value="TreeGrafter"/>
</dbReference>
<dbReference type="GO" id="GO:0006506">
    <property type="term" value="P:GPI anchor biosynthetic process"/>
    <property type="evidence" value="ECO:0007669"/>
    <property type="project" value="UniProtKB-UniPathway"/>
</dbReference>
<dbReference type="InterPro" id="IPR005599">
    <property type="entry name" value="GPI_mannosylTrfase"/>
</dbReference>
<dbReference type="PANTHER" id="PTHR22760">
    <property type="entry name" value="GLYCOSYLTRANSFERASE"/>
    <property type="match status" value="1"/>
</dbReference>
<dbReference type="PANTHER" id="PTHR22760:SF3">
    <property type="entry name" value="GPI MANNOSYLTRANSFERASE 4"/>
    <property type="match status" value="1"/>
</dbReference>
<dbReference type="Pfam" id="PF03901">
    <property type="entry name" value="Glyco_transf_22"/>
    <property type="match status" value="1"/>
</dbReference>
<sequence>MDNKLIWLLPAIGLVVALQPSYIHPDEHFQTLEMLMIKFYGISGTVPWEFEPTNNARSYFPLYAFYGPLFYLMRDILKVQNPLNILRIIRFYNFMLYLSVLYYALPKLVNENKLQNKGRVNEALVFILSSYITWCYQCHSFSNSLETILLLLVLSNYTDILSNKAGLLQLVSTGFLISVGTFTRISFPAFLLLPSIQVFLKVLYRKWIQMVVIAVSMTLSTSIIVYFDTFMYESDEIIIAPLKNVVYNLNVDNLAKHGLHPRYTHLLVNIPLILGPGLLMIRNTKNDFLNLPLLSIISSLFFLSALRHQELRFLLPVVPLFSTLLTRFRYRPYLFRIWLVFNAAMCIIMGIFHQGGVIPMISNINAEQDLTIDIWWKTYSPPTWLYNNDILTVSTTSIVNNIENLDLVQFNVKTNHVVDLKGCDFDLVLEAIQNFRINGVKSLRLIVPNSMTSNVAALNQTYLVTKENSVFPHLDLDHLDSGIQNIIGLSEYKVSL</sequence>
<accession>Q6FMA9</accession>
<keyword id="KW-0256">Endoplasmic reticulum</keyword>
<keyword id="KW-0325">Glycoprotein</keyword>
<keyword id="KW-0328">Glycosyltransferase</keyword>
<keyword id="KW-0337">GPI-anchor biosynthesis</keyword>
<keyword id="KW-0472">Membrane</keyword>
<keyword id="KW-1185">Reference proteome</keyword>
<keyword id="KW-0808">Transferase</keyword>
<keyword id="KW-0812">Transmembrane</keyword>
<keyword id="KW-1133">Transmembrane helix</keyword>
<protein>
    <recommendedName>
        <fullName>GPI mannosyltransferase 4</fullName>
        <ecNumber>2.4.1.-</ecNumber>
    </recommendedName>
    <alternativeName>
        <fullName>GPI mannosyltransferase IV</fullName>
        <shortName>GPI-MT-IV</shortName>
    </alternativeName>
</protein>
<organism>
    <name type="scientific">Candida glabrata (strain ATCC 2001 / BCRC 20586 / JCM 3761 / NBRC 0622 / NRRL Y-65 / CBS 138)</name>
    <name type="common">Yeast</name>
    <name type="synonym">Nakaseomyces glabratus</name>
    <dbReference type="NCBI Taxonomy" id="284593"/>
    <lineage>
        <taxon>Eukaryota</taxon>
        <taxon>Fungi</taxon>
        <taxon>Dikarya</taxon>
        <taxon>Ascomycota</taxon>
        <taxon>Saccharomycotina</taxon>
        <taxon>Saccharomycetes</taxon>
        <taxon>Saccharomycetales</taxon>
        <taxon>Saccharomycetaceae</taxon>
        <taxon>Nakaseomyces</taxon>
    </lineage>
</organism>
<evidence type="ECO:0000250" key="1"/>
<evidence type="ECO:0000255" key="2"/>
<evidence type="ECO:0000305" key="3"/>
<gene>
    <name type="primary">SMP3</name>
    <name type="ordered locus">CAGL0K09548g</name>
</gene>
<name>SMP3_CANGA</name>
<feature type="chain" id="PRO_0000246275" description="GPI mannosyltransferase 4">
    <location>
        <begin position="1"/>
        <end position="496"/>
    </location>
</feature>
<feature type="transmembrane region" description="Helical" evidence="2">
    <location>
        <begin position="5"/>
        <end position="25"/>
    </location>
</feature>
<feature type="transmembrane region" description="Helical" evidence="2">
    <location>
        <begin position="56"/>
        <end position="73"/>
    </location>
</feature>
<feature type="transmembrane region" description="Helical" evidence="2">
    <location>
        <begin position="85"/>
        <end position="105"/>
    </location>
</feature>
<feature type="transmembrane region" description="Helical" evidence="2">
    <location>
        <begin position="174"/>
        <end position="194"/>
    </location>
</feature>
<feature type="transmembrane region" description="Helical" evidence="2">
    <location>
        <begin position="207"/>
        <end position="227"/>
    </location>
</feature>
<feature type="transmembrane region" description="Helical" evidence="2">
    <location>
        <begin position="261"/>
        <end position="281"/>
    </location>
</feature>
<feature type="transmembrane region" description="Helical" evidence="2">
    <location>
        <begin position="286"/>
        <end position="306"/>
    </location>
</feature>
<feature type="transmembrane region" description="Helical" evidence="2">
    <location>
        <begin position="311"/>
        <end position="328"/>
    </location>
</feature>
<feature type="transmembrane region" description="Helical" evidence="2">
    <location>
        <begin position="337"/>
        <end position="357"/>
    </location>
</feature>
<feature type="glycosylation site" description="N-linked (GlcNAc...) asparagine" evidence="2">
    <location>
        <position position="156"/>
    </location>
</feature>
<feature type="glycosylation site" description="N-linked (GlcNAc...) asparagine" evidence="2">
    <location>
        <position position="459"/>
    </location>
</feature>
<reference key="1">
    <citation type="journal article" date="2004" name="Nature">
        <title>Genome evolution in yeasts.</title>
        <authorList>
            <person name="Dujon B."/>
            <person name="Sherman D."/>
            <person name="Fischer G."/>
            <person name="Durrens P."/>
            <person name="Casaregola S."/>
            <person name="Lafontaine I."/>
            <person name="de Montigny J."/>
            <person name="Marck C."/>
            <person name="Neuveglise C."/>
            <person name="Talla E."/>
            <person name="Goffard N."/>
            <person name="Frangeul L."/>
            <person name="Aigle M."/>
            <person name="Anthouard V."/>
            <person name="Babour A."/>
            <person name="Barbe V."/>
            <person name="Barnay S."/>
            <person name="Blanchin S."/>
            <person name="Beckerich J.-M."/>
            <person name="Beyne E."/>
            <person name="Bleykasten C."/>
            <person name="Boisrame A."/>
            <person name="Boyer J."/>
            <person name="Cattolico L."/>
            <person name="Confanioleri F."/>
            <person name="de Daruvar A."/>
            <person name="Despons L."/>
            <person name="Fabre E."/>
            <person name="Fairhead C."/>
            <person name="Ferry-Dumazet H."/>
            <person name="Groppi A."/>
            <person name="Hantraye F."/>
            <person name="Hennequin C."/>
            <person name="Jauniaux N."/>
            <person name="Joyet P."/>
            <person name="Kachouri R."/>
            <person name="Kerrest A."/>
            <person name="Koszul R."/>
            <person name="Lemaire M."/>
            <person name="Lesur I."/>
            <person name="Ma L."/>
            <person name="Muller H."/>
            <person name="Nicaud J.-M."/>
            <person name="Nikolski M."/>
            <person name="Oztas S."/>
            <person name="Ozier-Kalogeropoulos O."/>
            <person name="Pellenz S."/>
            <person name="Potier S."/>
            <person name="Richard G.-F."/>
            <person name="Straub M.-L."/>
            <person name="Suleau A."/>
            <person name="Swennen D."/>
            <person name="Tekaia F."/>
            <person name="Wesolowski-Louvel M."/>
            <person name="Westhof E."/>
            <person name="Wirth B."/>
            <person name="Zeniou-Meyer M."/>
            <person name="Zivanovic Y."/>
            <person name="Bolotin-Fukuhara M."/>
            <person name="Thierry A."/>
            <person name="Bouchier C."/>
            <person name="Caudron B."/>
            <person name="Scarpelli C."/>
            <person name="Gaillardin C."/>
            <person name="Weissenbach J."/>
            <person name="Wincker P."/>
            <person name="Souciet J.-L."/>
        </authorList>
    </citation>
    <scope>NUCLEOTIDE SEQUENCE [LARGE SCALE GENOMIC DNA]</scope>
    <source>
        <strain>ATCC 2001 / BCRC 20586 / JCM 3761 / NBRC 0622 / NRRL Y-65 / CBS 138</strain>
    </source>
</reference>
<comment type="function">
    <text evidence="1">Alpha-1,2-mannosyltransferase involved in glycosylphosphatidylinositol-anchor biosynthesis. Transfers a fourth mannose to trimannosyl-GPIs during GPI precursor assembly. The presence of a fourth mannose in GPI is essential in fungi (By similarity).</text>
</comment>
<comment type="pathway">
    <text>Glycolipid biosynthesis; glycosylphosphatidylinositol-anchor biosynthesis.</text>
</comment>
<comment type="subcellular location">
    <subcellularLocation>
        <location evidence="1">Endoplasmic reticulum membrane</location>
        <topology evidence="1">Multi-pass membrane protein</topology>
    </subcellularLocation>
</comment>
<comment type="similarity">
    <text evidence="3">Belongs to the glycosyltransferase 22 family. PIGZ subfamily.</text>
</comment>